<sequence length="228" mass="26689">MPRRGLVAGPDLEYFQRRYFTPAEVAQHNRPEDLWVSYLGRVYDLTSLAQEYKGNLLLKPIVEVAGQDISHWFDPKTRDIRKHIDPLTGCLRYCTPRGRFVHVPPQLPCSDWANDFGKPWWQGSYYEVGRLSAKTRSIRIINTLTSQEHTLEVGVLESIWEILHRYLPYNSHAASYTWKYEGKNLNMDFTLEENGIRDEEEEFDYLSMDGTLHTPAILLYFNDDLTEL</sequence>
<accession>Q6P9G0</accession>
<accession>D3DTQ8</accession>
<accession>Q96DM7</accession>
<comment type="function">
    <text evidence="1">Radial spoke stalk protein that binds heme under oxidizing conditions. Required for the coordinated beating of multiple cilia maybe by functioning in a redox signaling pathway.</text>
</comment>
<comment type="subcellular location">
    <subcellularLocation>
        <location evidence="1">Cytoplasm</location>
        <location evidence="1">Cytoskeleton</location>
        <location evidence="1">Cilium axoneme</location>
    </subcellularLocation>
    <text evidence="1">Localizes to the radial spoke stalk.</text>
</comment>
<comment type="alternative products">
    <event type="alternative splicing"/>
    <isoform>
        <id>Q6P9G0-1</id>
        <name>1</name>
        <sequence type="displayed"/>
    </isoform>
    <isoform>
        <id>Q6P9G0-2</id>
        <name>2</name>
        <sequence type="described" ref="VSP_029823 VSP_029824"/>
    </isoform>
</comment>
<comment type="similarity">
    <text evidence="4">Belongs to the cytochrome b5 family.</text>
</comment>
<evidence type="ECO:0000250" key="1">
    <source>
        <dbReference type="UniProtKB" id="Q567I9"/>
    </source>
</evidence>
<evidence type="ECO:0000255" key="2">
    <source>
        <dbReference type="PROSITE-ProRule" id="PRU00279"/>
    </source>
</evidence>
<evidence type="ECO:0000303" key="3">
    <source>
    </source>
</evidence>
<evidence type="ECO:0000305" key="4"/>
<evidence type="ECO:0000312" key="5">
    <source>
        <dbReference type="HGNC" id="HGNC:26516"/>
    </source>
</evidence>
<name>CB5D1_HUMAN</name>
<dbReference type="EMBL" id="AK057061">
    <property type="protein sequence ID" value="BAB71357.1"/>
    <property type="molecule type" value="mRNA"/>
</dbReference>
<dbReference type="EMBL" id="AK289520">
    <property type="protein sequence ID" value="BAF82209.1"/>
    <property type="molecule type" value="mRNA"/>
</dbReference>
<dbReference type="EMBL" id="CH471108">
    <property type="protein sequence ID" value="EAW90119.1"/>
    <property type="molecule type" value="Genomic_DNA"/>
</dbReference>
<dbReference type="EMBL" id="CH471108">
    <property type="protein sequence ID" value="EAW90122.1"/>
    <property type="molecule type" value="Genomic_DNA"/>
</dbReference>
<dbReference type="EMBL" id="CH471108">
    <property type="protein sequence ID" value="EAW90121.1"/>
    <property type="molecule type" value="Genomic_DNA"/>
</dbReference>
<dbReference type="EMBL" id="BC060779">
    <property type="protein sequence ID" value="AAH60779.1"/>
    <property type="molecule type" value="mRNA"/>
</dbReference>
<dbReference type="CCDS" id="CCDS11123.1">
    <molecule id="Q6P9G0-1"/>
</dbReference>
<dbReference type="CCDS" id="CCDS82061.1">
    <molecule id="Q6P9G0-2"/>
</dbReference>
<dbReference type="RefSeq" id="NP_001317039.1">
    <molecule id="Q6P9G0-2"/>
    <property type="nucleotide sequence ID" value="NM_001330110.2"/>
</dbReference>
<dbReference type="RefSeq" id="NP_653208.2">
    <molecule id="Q6P9G0-1"/>
    <property type="nucleotide sequence ID" value="NM_144607.5"/>
</dbReference>
<dbReference type="PDB" id="8J07">
    <property type="method" value="EM"/>
    <property type="resolution" value="4.10 A"/>
    <property type="chains" value="Z/z=1-228"/>
</dbReference>
<dbReference type="PDBsum" id="8J07"/>
<dbReference type="EMDB" id="EMD-35888"/>
<dbReference type="SMR" id="Q6P9G0"/>
<dbReference type="BioGRID" id="125880">
    <property type="interactions" value="2"/>
</dbReference>
<dbReference type="ComplexPortal" id="CPX-8163">
    <property type="entry name" value="Radial spoke complex, ciliiar variant"/>
</dbReference>
<dbReference type="ComplexPortal" id="CPX-8164">
    <property type="entry name" value="Radial spoke complex, flagellar variant"/>
</dbReference>
<dbReference type="FunCoup" id="Q6P9G0">
    <property type="interactions" value="38"/>
</dbReference>
<dbReference type="IntAct" id="Q6P9G0">
    <property type="interactions" value="1"/>
</dbReference>
<dbReference type="STRING" id="9606.ENSP00000331479"/>
<dbReference type="GlyGen" id="Q6P9G0">
    <property type="glycosylation" value="1 site"/>
</dbReference>
<dbReference type="iPTMnet" id="Q6P9G0"/>
<dbReference type="PhosphoSitePlus" id="Q6P9G0"/>
<dbReference type="BioMuta" id="CYB5D1"/>
<dbReference type="DMDM" id="74749152"/>
<dbReference type="MassIVE" id="Q6P9G0"/>
<dbReference type="PaxDb" id="9606-ENSP00000331479"/>
<dbReference type="PeptideAtlas" id="Q6P9G0"/>
<dbReference type="ProteomicsDB" id="67043">
    <molecule id="Q6P9G0-1"/>
</dbReference>
<dbReference type="ProteomicsDB" id="67044">
    <molecule id="Q6P9G0-2"/>
</dbReference>
<dbReference type="Antibodypedia" id="12269">
    <property type="antibodies" value="84 antibodies from 15 providers"/>
</dbReference>
<dbReference type="DNASU" id="124637"/>
<dbReference type="Ensembl" id="ENST00000332439.5">
    <molecule id="Q6P9G0-1"/>
    <property type="protein sequence ID" value="ENSP00000331479.4"/>
    <property type="gene ID" value="ENSG00000182224.12"/>
</dbReference>
<dbReference type="Ensembl" id="ENST00000571846.5">
    <molecule id="Q6P9G0-2"/>
    <property type="protein sequence ID" value="ENSP00000459369.1"/>
    <property type="gene ID" value="ENSG00000182224.12"/>
</dbReference>
<dbReference type="GeneID" id="124637"/>
<dbReference type="KEGG" id="hsa:124637"/>
<dbReference type="MANE-Select" id="ENST00000332439.5">
    <property type="protein sequence ID" value="ENSP00000331479.4"/>
    <property type="RefSeq nucleotide sequence ID" value="NM_144607.6"/>
    <property type="RefSeq protein sequence ID" value="NP_653208.2"/>
</dbReference>
<dbReference type="UCSC" id="uc002gjb.5">
    <molecule id="Q6P9G0-1"/>
    <property type="organism name" value="human"/>
</dbReference>
<dbReference type="AGR" id="HGNC:26516"/>
<dbReference type="CTD" id="124637"/>
<dbReference type="GeneCards" id="CYB5D1"/>
<dbReference type="HGNC" id="HGNC:26516">
    <property type="gene designation" value="CYB5D1"/>
</dbReference>
<dbReference type="HPA" id="ENSG00000182224">
    <property type="expression patterns" value="Low tissue specificity"/>
</dbReference>
<dbReference type="neXtProt" id="NX_Q6P9G0"/>
<dbReference type="OpenTargets" id="ENSG00000182224"/>
<dbReference type="PharmGKB" id="PA142672058"/>
<dbReference type="VEuPathDB" id="HostDB:ENSG00000182224"/>
<dbReference type="eggNOG" id="KOG0537">
    <property type="taxonomic scope" value="Eukaryota"/>
</dbReference>
<dbReference type="GeneTree" id="ENSGT00440000037582"/>
<dbReference type="HOGENOM" id="CLU_131019_0_0_1"/>
<dbReference type="InParanoid" id="Q6P9G0"/>
<dbReference type="OMA" id="DLTHFFH"/>
<dbReference type="OrthoDB" id="260091at2759"/>
<dbReference type="PAN-GO" id="Q6P9G0">
    <property type="GO annotations" value="0 GO annotations based on evolutionary models"/>
</dbReference>
<dbReference type="PhylomeDB" id="Q6P9G0"/>
<dbReference type="TreeFam" id="TF324861"/>
<dbReference type="PathwayCommons" id="Q6P9G0"/>
<dbReference type="SignaLink" id="Q6P9G0"/>
<dbReference type="BioGRID-ORCS" id="124637">
    <property type="hits" value="17 hits in 1156 CRISPR screens"/>
</dbReference>
<dbReference type="ChiTaRS" id="CYB5D1">
    <property type="organism name" value="human"/>
</dbReference>
<dbReference type="GenomeRNAi" id="124637"/>
<dbReference type="Pharos" id="Q6P9G0">
    <property type="development level" value="Tdark"/>
</dbReference>
<dbReference type="PRO" id="PR:Q6P9G0"/>
<dbReference type="Proteomes" id="UP000005640">
    <property type="component" value="Chromosome 17"/>
</dbReference>
<dbReference type="RNAct" id="Q6P9G0">
    <property type="molecule type" value="protein"/>
</dbReference>
<dbReference type="Bgee" id="ENSG00000182224">
    <property type="expression patterns" value="Expressed in right uterine tube and 102 other cell types or tissues"/>
</dbReference>
<dbReference type="ExpressionAtlas" id="Q6P9G0">
    <property type="expression patterns" value="baseline and differential"/>
</dbReference>
<dbReference type="GO" id="GO:0042995">
    <property type="term" value="C:cell projection"/>
    <property type="evidence" value="ECO:0007669"/>
    <property type="project" value="UniProtKB-KW"/>
</dbReference>
<dbReference type="GO" id="GO:0005737">
    <property type="term" value="C:cytoplasm"/>
    <property type="evidence" value="ECO:0007669"/>
    <property type="project" value="UniProtKB-KW"/>
</dbReference>
<dbReference type="GO" id="GO:0005856">
    <property type="term" value="C:cytoskeleton"/>
    <property type="evidence" value="ECO:0007669"/>
    <property type="project" value="UniProtKB-KW"/>
</dbReference>
<dbReference type="GO" id="GO:0046872">
    <property type="term" value="F:metal ion binding"/>
    <property type="evidence" value="ECO:0007669"/>
    <property type="project" value="UniProtKB-KW"/>
</dbReference>
<dbReference type="GO" id="GO:0003341">
    <property type="term" value="P:cilium movement"/>
    <property type="evidence" value="ECO:0000318"/>
    <property type="project" value="GO_Central"/>
</dbReference>
<dbReference type="GO" id="GO:0003356">
    <property type="term" value="P:regulation of cilium beat frequency"/>
    <property type="evidence" value="ECO:0000250"/>
    <property type="project" value="UniProtKB"/>
</dbReference>
<dbReference type="Gene3D" id="3.10.120.10">
    <property type="entry name" value="Cytochrome b5-like heme/steroid binding domain"/>
    <property type="match status" value="1"/>
</dbReference>
<dbReference type="InterPro" id="IPR001199">
    <property type="entry name" value="Cyt_B5-like_heme/steroid-bd"/>
</dbReference>
<dbReference type="InterPro" id="IPR036400">
    <property type="entry name" value="Cyt_B5-like_heme/steroid_sf"/>
</dbReference>
<dbReference type="InterPro" id="IPR052320">
    <property type="entry name" value="Cytochrome_b5_domain"/>
</dbReference>
<dbReference type="PANTHER" id="PTHR21281">
    <property type="entry name" value="CYTOCHROME B5 DOMAIN-CONTAINING PROTEIN 1"/>
    <property type="match status" value="1"/>
</dbReference>
<dbReference type="PANTHER" id="PTHR21281:SF0">
    <property type="entry name" value="CYTOCHROME B5 DOMAIN-CONTAINING PROTEIN 1"/>
    <property type="match status" value="1"/>
</dbReference>
<dbReference type="Pfam" id="PF00173">
    <property type="entry name" value="Cyt-b5"/>
    <property type="match status" value="1"/>
</dbReference>
<dbReference type="SMART" id="SM01117">
    <property type="entry name" value="Cyt-b5"/>
    <property type="match status" value="1"/>
</dbReference>
<dbReference type="SUPFAM" id="SSF55856">
    <property type="entry name" value="Cytochrome b5-like heme/steroid binding domain"/>
    <property type="match status" value="1"/>
</dbReference>
<dbReference type="PROSITE" id="PS50255">
    <property type="entry name" value="CYTOCHROME_B5_2"/>
    <property type="match status" value="1"/>
</dbReference>
<gene>
    <name evidence="5" type="primary">CYB5D1</name>
</gene>
<protein>
    <recommendedName>
        <fullName evidence="4">Cytochrome b5 domain-containing protein 1</fullName>
    </recommendedName>
</protein>
<organism>
    <name type="scientific">Homo sapiens</name>
    <name type="common">Human</name>
    <dbReference type="NCBI Taxonomy" id="9606"/>
    <lineage>
        <taxon>Eukaryota</taxon>
        <taxon>Metazoa</taxon>
        <taxon>Chordata</taxon>
        <taxon>Craniata</taxon>
        <taxon>Vertebrata</taxon>
        <taxon>Euteleostomi</taxon>
        <taxon>Mammalia</taxon>
        <taxon>Eutheria</taxon>
        <taxon>Euarchontoglires</taxon>
        <taxon>Primates</taxon>
        <taxon>Haplorrhini</taxon>
        <taxon>Catarrhini</taxon>
        <taxon>Hominidae</taxon>
        <taxon>Homo</taxon>
    </lineage>
</organism>
<reference key="1">
    <citation type="journal article" date="2004" name="Nat. Genet.">
        <title>Complete sequencing and characterization of 21,243 full-length human cDNAs.</title>
        <authorList>
            <person name="Ota T."/>
            <person name="Suzuki Y."/>
            <person name="Nishikawa T."/>
            <person name="Otsuki T."/>
            <person name="Sugiyama T."/>
            <person name="Irie R."/>
            <person name="Wakamatsu A."/>
            <person name="Hayashi K."/>
            <person name="Sato H."/>
            <person name="Nagai K."/>
            <person name="Kimura K."/>
            <person name="Makita H."/>
            <person name="Sekine M."/>
            <person name="Obayashi M."/>
            <person name="Nishi T."/>
            <person name="Shibahara T."/>
            <person name="Tanaka T."/>
            <person name="Ishii S."/>
            <person name="Yamamoto J."/>
            <person name="Saito K."/>
            <person name="Kawai Y."/>
            <person name="Isono Y."/>
            <person name="Nakamura Y."/>
            <person name="Nagahari K."/>
            <person name="Murakami K."/>
            <person name="Yasuda T."/>
            <person name="Iwayanagi T."/>
            <person name="Wagatsuma M."/>
            <person name="Shiratori A."/>
            <person name="Sudo H."/>
            <person name="Hosoiri T."/>
            <person name="Kaku Y."/>
            <person name="Kodaira H."/>
            <person name="Kondo H."/>
            <person name="Sugawara M."/>
            <person name="Takahashi M."/>
            <person name="Kanda K."/>
            <person name="Yokoi T."/>
            <person name="Furuya T."/>
            <person name="Kikkawa E."/>
            <person name="Omura Y."/>
            <person name="Abe K."/>
            <person name="Kamihara K."/>
            <person name="Katsuta N."/>
            <person name="Sato K."/>
            <person name="Tanikawa M."/>
            <person name="Yamazaki M."/>
            <person name="Ninomiya K."/>
            <person name="Ishibashi T."/>
            <person name="Yamashita H."/>
            <person name="Murakawa K."/>
            <person name="Fujimori K."/>
            <person name="Tanai H."/>
            <person name="Kimata M."/>
            <person name="Watanabe M."/>
            <person name="Hiraoka S."/>
            <person name="Chiba Y."/>
            <person name="Ishida S."/>
            <person name="Ono Y."/>
            <person name="Takiguchi S."/>
            <person name="Watanabe S."/>
            <person name="Yosida M."/>
            <person name="Hotuta T."/>
            <person name="Kusano J."/>
            <person name="Kanehori K."/>
            <person name="Takahashi-Fujii A."/>
            <person name="Hara H."/>
            <person name="Tanase T.-O."/>
            <person name="Nomura Y."/>
            <person name="Togiya S."/>
            <person name="Komai F."/>
            <person name="Hara R."/>
            <person name="Takeuchi K."/>
            <person name="Arita M."/>
            <person name="Imose N."/>
            <person name="Musashino K."/>
            <person name="Yuuki H."/>
            <person name="Oshima A."/>
            <person name="Sasaki N."/>
            <person name="Aotsuka S."/>
            <person name="Yoshikawa Y."/>
            <person name="Matsunawa H."/>
            <person name="Ichihara T."/>
            <person name="Shiohata N."/>
            <person name="Sano S."/>
            <person name="Moriya S."/>
            <person name="Momiyama H."/>
            <person name="Satoh N."/>
            <person name="Takami S."/>
            <person name="Terashima Y."/>
            <person name="Suzuki O."/>
            <person name="Nakagawa S."/>
            <person name="Senoh A."/>
            <person name="Mizoguchi H."/>
            <person name="Goto Y."/>
            <person name="Shimizu F."/>
            <person name="Wakebe H."/>
            <person name="Hishigaki H."/>
            <person name="Watanabe T."/>
            <person name="Sugiyama A."/>
            <person name="Takemoto M."/>
            <person name="Kawakami B."/>
            <person name="Yamazaki M."/>
            <person name="Watanabe K."/>
            <person name="Kumagai A."/>
            <person name="Itakura S."/>
            <person name="Fukuzumi Y."/>
            <person name="Fujimori Y."/>
            <person name="Komiyama M."/>
            <person name="Tashiro H."/>
            <person name="Tanigami A."/>
            <person name="Fujiwara T."/>
            <person name="Ono T."/>
            <person name="Yamada K."/>
            <person name="Fujii Y."/>
            <person name="Ozaki K."/>
            <person name="Hirao M."/>
            <person name="Ohmori Y."/>
            <person name="Kawabata A."/>
            <person name="Hikiji T."/>
            <person name="Kobatake N."/>
            <person name="Inagaki H."/>
            <person name="Ikema Y."/>
            <person name="Okamoto S."/>
            <person name="Okitani R."/>
            <person name="Kawakami T."/>
            <person name="Noguchi S."/>
            <person name="Itoh T."/>
            <person name="Shigeta K."/>
            <person name="Senba T."/>
            <person name="Matsumura K."/>
            <person name="Nakajima Y."/>
            <person name="Mizuno T."/>
            <person name="Morinaga M."/>
            <person name="Sasaki M."/>
            <person name="Togashi T."/>
            <person name="Oyama M."/>
            <person name="Hata H."/>
            <person name="Watanabe M."/>
            <person name="Komatsu T."/>
            <person name="Mizushima-Sugano J."/>
            <person name="Satoh T."/>
            <person name="Shirai Y."/>
            <person name="Takahashi Y."/>
            <person name="Nakagawa K."/>
            <person name="Okumura K."/>
            <person name="Nagase T."/>
            <person name="Nomura N."/>
            <person name="Kikuchi H."/>
            <person name="Masuho Y."/>
            <person name="Yamashita R."/>
            <person name="Nakai K."/>
            <person name="Yada T."/>
            <person name="Nakamura Y."/>
            <person name="Ohara O."/>
            <person name="Isogai T."/>
            <person name="Sugano S."/>
        </authorList>
    </citation>
    <scope>NUCLEOTIDE SEQUENCE [LARGE SCALE MRNA] (ISOFORMS 1 AND 2)</scope>
    <source>
        <tissue>Cerebellum</tissue>
    </source>
</reference>
<reference key="2">
    <citation type="submission" date="2005-09" db="EMBL/GenBank/DDBJ databases">
        <authorList>
            <person name="Mural R.J."/>
            <person name="Istrail S."/>
            <person name="Sutton G.G."/>
            <person name="Florea L."/>
            <person name="Halpern A.L."/>
            <person name="Mobarry C.M."/>
            <person name="Lippert R."/>
            <person name="Walenz B."/>
            <person name="Shatkay H."/>
            <person name="Dew I."/>
            <person name="Miller J.R."/>
            <person name="Flanigan M.J."/>
            <person name="Edwards N.J."/>
            <person name="Bolanos R."/>
            <person name="Fasulo D."/>
            <person name="Halldorsson B.V."/>
            <person name="Hannenhalli S."/>
            <person name="Turner R."/>
            <person name="Yooseph S."/>
            <person name="Lu F."/>
            <person name="Nusskern D.R."/>
            <person name="Shue B.C."/>
            <person name="Zheng X.H."/>
            <person name="Zhong F."/>
            <person name="Delcher A.L."/>
            <person name="Huson D.H."/>
            <person name="Kravitz S.A."/>
            <person name="Mouchard L."/>
            <person name="Reinert K."/>
            <person name="Remington K.A."/>
            <person name="Clark A.G."/>
            <person name="Waterman M.S."/>
            <person name="Eichler E.E."/>
            <person name="Adams M.D."/>
            <person name="Hunkapiller M.W."/>
            <person name="Myers E.W."/>
            <person name="Venter J.C."/>
        </authorList>
    </citation>
    <scope>NUCLEOTIDE SEQUENCE [LARGE SCALE GENOMIC DNA]</scope>
</reference>
<reference key="3">
    <citation type="journal article" date="2004" name="Genome Res.">
        <title>The status, quality, and expansion of the NIH full-length cDNA project: the Mammalian Gene Collection (MGC).</title>
        <authorList>
            <consortium name="The MGC Project Team"/>
        </authorList>
    </citation>
    <scope>NUCLEOTIDE SEQUENCE [LARGE SCALE MRNA] (ISOFORM 1)</scope>
    <source>
        <tissue>Placenta</tissue>
    </source>
</reference>
<reference key="4">
    <citation type="journal article" date="2021" name="Proc. Natl. Acad. Sci. U.S.A.">
        <title>Heme-binding protein CYB5D1 is a radial spoke component required for coordinated ciliary beating.</title>
        <authorList>
            <person name="Zhao L."/>
            <person name="Xie H."/>
            <person name="Kang Y."/>
            <person name="Lin Y."/>
            <person name="Liu G."/>
            <person name="Sakato-Antoku M."/>
            <person name="Patel-King R.S."/>
            <person name="Wang B."/>
            <person name="Wan C."/>
            <person name="King S.M."/>
            <person name="Zhao C."/>
            <person name="Huang K."/>
        </authorList>
    </citation>
    <scope>FUNCTION</scope>
</reference>
<feature type="chain" id="PRO_0000312315" description="Cytochrome b5 domain-containing protein 1">
    <location>
        <begin position="1"/>
        <end position="228"/>
    </location>
</feature>
<feature type="domain" description="Cytochrome b5 heme-binding" evidence="2">
    <location>
        <begin position="17"/>
        <end position="83"/>
    </location>
</feature>
<feature type="binding site" description="axial binding residue" evidence="2">
    <location>
        <position position="52"/>
    </location>
    <ligand>
        <name>heme</name>
        <dbReference type="ChEBI" id="CHEBI:30413"/>
    </ligand>
    <ligandPart>
        <name>Fe</name>
        <dbReference type="ChEBI" id="CHEBI:18248"/>
    </ligandPart>
</feature>
<feature type="binding site" description="axial binding residue" evidence="2">
    <location>
        <position position="83"/>
    </location>
    <ligand>
        <name>heme</name>
        <dbReference type="ChEBI" id="CHEBI:30413"/>
    </ligand>
    <ligandPart>
        <name>Fe</name>
        <dbReference type="ChEBI" id="CHEBI:18248"/>
    </ligandPart>
</feature>
<feature type="splice variant" id="VSP_029823" description="In isoform 2." evidence="3">
    <original>VGVLE</original>
    <variation>LHVEI</variation>
    <location>
        <begin position="153"/>
        <end position="157"/>
    </location>
</feature>
<feature type="splice variant" id="VSP_029824" description="In isoform 2." evidence="3">
    <location>
        <begin position="158"/>
        <end position="228"/>
    </location>
</feature>
<feature type="sequence variant" id="VAR_037486" description="In dbSNP:rs12453250.">
    <original>F</original>
    <variation>L</variation>
    <location>
        <position position="20"/>
    </location>
</feature>
<keyword id="KW-0002">3D-structure</keyword>
<keyword id="KW-0025">Alternative splicing</keyword>
<keyword id="KW-0966">Cell projection</keyword>
<keyword id="KW-0963">Cytoplasm</keyword>
<keyword id="KW-0206">Cytoskeleton</keyword>
<keyword id="KW-0349">Heme</keyword>
<keyword id="KW-0408">Iron</keyword>
<keyword id="KW-0479">Metal-binding</keyword>
<keyword id="KW-1267">Proteomics identification</keyword>
<keyword id="KW-1185">Reference proteome</keyword>
<proteinExistence type="evidence at protein level"/>